<accession>Q892N9</accession>
<organism>
    <name type="scientific">Clostridium tetani (strain Massachusetts / E88)</name>
    <dbReference type="NCBI Taxonomy" id="212717"/>
    <lineage>
        <taxon>Bacteria</taxon>
        <taxon>Bacillati</taxon>
        <taxon>Bacillota</taxon>
        <taxon>Clostridia</taxon>
        <taxon>Eubacteriales</taxon>
        <taxon>Clostridiaceae</taxon>
        <taxon>Clostridium</taxon>
    </lineage>
</organism>
<reference key="1">
    <citation type="journal article" date="2003" name="Proc. Natl. Acad. Sci. U.S.A.">
        <title>The genome sequence of Clostridium tetani, the causative agent of tetanus disease.</title>
        <authorList>
            <person name="Brueggemann H."/>
            <person name="Baeumer S."/>
            <person name="Fricke W.F."/>
            <person name="Wiezer A."/>
            <person name="Liesegang H."/>
            <person name="Decker I."/>
            <person name="Herzberg C."/>
            <person name="Martinez-Arias R."/>
            <person name="Merkl R."/>
            <person name="Henne A."/>
            <person name="Gottschalk G."/>
        </authorList>
    </citation>
    <scope>NUCLEOTIDE SEQUENCE [LARGE SCALE GENOMIC DNA]</scope>
    <source>
        <strain>Massachusetts / E88</strain>
    </source>
</reference>
<protein>
    <recommendedName>
        <fullName evidence="1">Probable nicotinate-nucleotide adenylyltransferase</fullName>
        <ecNumber evidence="1">2.7.7.18</ecNumber>
    </recommendedName>
    <alternativeName>
        <fullName evidence="1">Deamido-NAD(+) diphosphorylase</fullName>
    </alternativeName>
    <alternativeName>
        <fullName evidence="1">Deamido-NAD(+) pyrophosphorylase</fullName>
    </alternativeName>
    <alternativeName>
        <fullName evidence="1">Nicotinate mononucleotide adenylyltransferase</fullName>
        <shortName evidence="1">NaMN adenylyltransferase</shortName>
    </alternativeName>
</protein>
<comment type="function">
    <text evidence="1">Catalyzes the reversible adenylation of nicotinate mononucleotide (NaMN) to nicotinic acid adenine dinucleotide (NaAD).</text>
</comment>
<comment type="catalytic activity">
    <reaction evidence="1">
        <text>nicotinate beta-D-ribonucleotide + ATP + H(+) = deamido-NAD(+) + diphosphate</text>
        <dbReference type="Rhea" id="RHEA:22860"/>
        <dbReference type="ChEBI" id="CHEBI:15378"/>
        <dbReference type="ChEBI" id="CHEBI:30616"/>
        <dbReference type="ChEBI" id="CHEBI:33019"/>
        <dbReference type="ChEBI" id="CHEBI:57502"/>
        <dbReference type="ChEBI" id="CHEBI:58437"/>
        <dbReference type="EC" id="2.7.7.18"/>
    </reaction>
</comment>
<comment type="pathway">
    <text evidence="1">Cofactor biosynthesis; NAD(+) biosynthesis; deamido-NAD(+) from nicotinate D-ribonucleotide: step 1/1.</text>
</comment>
<comment type="similarity">
    <text evidence="1">Belongs to the NadD family.</text>
</comment>
<dbReference type="EC" id="2.7.7.18" evidence="1"/>
<dbReference type="EMBL" id="AE015927">
    <property type="protein sequence ID" value="AAO36556.1"/>
    <property type="molecule type" value="Genomic_DNA"/>
</dbReference>
<dbReference type="RefSeq" id="WP_011100214.1">
    <property type="nucleotide sequence ID" value="NC_004557.1"/>
</dbReference>
<dbReference type="SMR" id="Q892N9"/>
<dbReference type="STRING" id="212717.CTC_02055"/>
<dbReference type="GeneID" id="24252798"/>
<dbReference type="KEGG" id="ctc:CTC_02055"/>
<dbReference type="HOGENOM" id="CLU_069765_0_1_9"/>
<dbReference type="OrthoDB" id="5295945at2"/>
<dbReference type="UniPathway" id="UPA00253">
    <property type="reaction ID" value="UER00332"/>
</dbReference>
<dbReference type="Proteomes" id="UP000001412">
    <property type="component" value="Chromosome"/>
</dbReference>
<dbReference type="GO" id="GO:0005524">
    <property type="term" value="F:ATP binding"/>
    <property type="evidence" value="ECO:0007669"/>
    <property type="project" value="UniProtKB-KW"/>
</dbReference>
<dbReference type="GO" id="GO:0004515">
    <property type="term" value="F:nicotinate-nucleotide adenylyltransferase activity"/>
    <property type="evidence" value="ECO:0007669"/>
    <property type="project" value="UniProtKB-UniRule"/>
</dbReference>
<dbReference type="GO" id="GO:0009435">
    <property type="term" value="P:NAD biosynthetic process"/>
    <property type="evidence" value="ECO:0007669"/>
    <property type="project" value="UniProtKB-UniRule"/>
</dbReference>
<dbReference type="CDD" id="cd02165">
    <property type="entry name" value="NMNAT"/>
    <property type="match status" value="1"/>
</dbReference>
<dbReference type="Gene3D" id="3.40.50.620">
    <property type="entry name" value="HUPs"/>
    <property type="match status" value="1"/>
</dbReference>
<dbReference type="HAMAP" id="MF_00244">
    <property type="entry name" value="NaMN_adenylyltr"/>
    <property type="match status" value="1"/>
</dbReference>
<dbReference type="InterPro" id="IPR004821">
    <property type="entry name" value="Cyt_trans-like"/>
</dbReference>
<dbReference type="InterPro" id="IPR005248">
    <property type="entry name" value="NadD/NMNAT"/>
</dbReference>
<dbReference type="InterPro" id="IPR014729">
    <property type="entry name" value="Rossmann-like_a/b/a_fold"/>
</dbReference>
<dbReference type="NCBIfam" id="TIGR00125">
    <property type="entry name" value="cyt_tran_rel"/>
    <property type="match status" value="1"/>
</dbReference>
<dbReference type="NCBIfam" id="TIGR00482">
    <property type="entry name" value="nicotinate (nicotinamide) nucleotide adenylyltransferase"/>
    <property type="match status" value="1"/>
</dbReference>
<dbReference type="NCBIfam" id="NF000840">
    <property type="entry name" value="PRK00071.1-3"/>
    <property type="match status" value="1"/>
</dbReference>
<dbReference type="PANTHER" id="PTHR39321">
    <property type="entry name" value="NICOTINATE-NUCLEOTIDE ADENYLYLTRANSFERASE-RELATED"/>
    <property type="match status" value="1"/>
</dbReference>
<dbReference type="PANTHER" id="PTHR39321:SF3">
    <property type="entry name" value="PHOSPHOPANTETHEINE ADENYLYLTRANSFERASE"/>
    <property type="match status" value="1"/>
</dbReference>
<dbReference type="Pfam" id="PF01467">
    <property type="entry name" value="CTP_transf_like"/>
    <property type="match status" value="1"/>
</dbReference>
<dbReference type="SUPFAM" id="SSF52374">
    <property type="entry name" value="Nucleotidylyl transferase"/>
    <property type="match status" value="1"/>
</dbReference>
<sequence length="200" mass="23666">MKKKAIFGGTFDPIHNGHLHIAYKALNRLKLDKIIFIPSGNPPHKHKECITDKNIRYNMVKYAIEQEDKFEISDYEVKKKGKSYTYETIEHFRKYHPNIDLYFIAGADCLMDIHKWKNIDSMMEKAKLVVFSRPGFSMDTILFQKKQVEEKFKKDIIFLDIPLLDVSSTEIREKIKKGEDIKDLIPEKTYNIIKKYGLYR</sequence>
<evidence type="ECO:0000255" key="1">
    <source>
        <dbReference type="HAMAP-Rule" id="MF_00244"/>
    </source>
</evidence>
<name>NADD_CLOTE</name>
<keyword id="KW-0067">ATP-binding</keyword>
<keyword id="KW-0520">NAD</keyword>
<keyword id="KW-0547">Nucleotide-binding</keyword>
<keyword id="KW-0548">Nucleotidyltransferase</keyword>
<keyword id="KW-0662">Pyridine nucleotide biosynthesis</keyword>
<keyword id="KW-1185">Reference proteome</keyword>
<keyword id="KW-0808">Transferase</keyword>
<proteinExistence type="inferred from homology"/>
<gene>
    <name evidence="1" type="primary">nadD</name>
    <name type="ordered locus">CTC_02055</name>
</gene>
<feature type="chain" id="PRO_0000181404" description="Probable nicotinate-nucleotide adenylyltransferase">
    <location>
        <begin position="1"/>
        <end position="200"/>
    </location>
</feature>